<keyword id="KW-0002">3D-structure</keyword>
<keyword id="KW-0007">Acetylation</keyword>
<keyword id="KW-0963">Cytoplasm</keyword>
<keyword id="KW-0903">Direct protein sequencing</keyword>
<keyword id="KW-0255">Endonuclease</keyword>
<keyword id="KW-0945">Host-virus interaction</keyword>
<keyword id="KW-0378">Hydrolase</keyword>
<keyword id="KW-1017">Isopeptide bond</keyword>
<keyword id="KW-0540">Nuclease</keyword>
<keyword id="KW-0539">Nucleus</keyword>
<keyword id="KW-0597">Phosphoprotein</keyword>
<keyword id="KW-1267">Proteomics identification</keyword>
<keyword id="KW-1185">Reference proteome</keyword>
<keyword id="KW-0677">Repeat</keyword>
<keyword id="KW-0804">Transcription</keyword>
<keyword id="KW-0805">Transcription regulation</keyword>
<keyword id="KW-0832">Ubl conjugation</keyword>
<evidence type="ECO:0000250" key="1">
    <source>
        <dbReference type="UniProtKB" id="Q78PY7"/>
    </source>
</evidence>
<evidence type="ECO:0000255" key="2"/>
<evidence type="ECO:0000255" key="3">
    <source>
        <dbReference type="PROSITE-ProRule" id="PRU00211"/>
    </source>
</evidence>
<evidence type="ECO:0000255" key="4">
    <source>
        <dbReference type="PROSITE-ProRule" id="PRU00272"/>
    </source>
</evidence>
<evidence type="ECO:0000269" key="5">
    <source>
    </source>
</evidence>
<evidence type="ECO:0000269" key="6">
    <source>
    </source>
</evidence>
<evidence type="ECO:0000269" key="7">
    <source>
    </source>
</evidence>
<evidence type="ECO:0000269" key="8">
    <source>
    </source>
</evidence>
<evidence type="ECO:0000269" key="9">
    <source>
    </source>
</evidence>
<evidence type="ECO:0000269" key="10">
    <source>
    </source>
</evidence>
<evidence type="ECO:0000269" key="11">
    <source>
    </source>
</evidence>
<evidence type="ECO:0000269" key="12">
    <source>
    </source>
</evidence>
<evidence type="ECO:0000269" key="13">
    <source>
    </source>
</evidence>
<evidence type="ECO:0000269" key="14">
    <source ref="4"/>
</evidence>
<evidence type="ECO:0000305" key="15"/>
<evidence type="ECO:0007744" key="16">
    <source>
        <dbReference type="PDB" id="3BDL"/>
    </source>
</evidence>
<evidence type="ECO:0007744" key="17">
    <source>
    </source>
</evidence>
<evidence type="ECO:0007744" key="18">
    <source>
    </source>
</evidence>
<evidence type="ECO:0007744" key="19">
    <source>
    </source>
</evidence>
<evidence type="ECO:0007744" key="20">
    <source>
    </source>
</evidence>
<evidence type="ECO:0007744" key="21">
    <source>
    </source>
</evidence>
<evidence type="ECO:0007744" key="22">
    <source>
    </source>
</evidence>
<evidence type="ECO:0007744" key="23">
    <source>
    </source>
</evidence>
<evidence type="ECO:0007744" key="24">
    <source>
    </source>
</evidence>
<evidence type="ECO:0007744" key="25">
    <source>
    </source>
</evidence>
<evidence type="ECO:0007744" key="26">
    <source>
    </source>
</evidence>
<evidence type="ECO:0007829" key="27">
    <source>
        <dbReference type="PDB" id="2E6N"/>
    </source>
</evidence>
<evidence type="ECO:0007829" key="28">
    <source>
        <dbReference type="PDB" id="2HQX"/>
    </source>
</evidence>
<evidence type="ECO:0007829" key="29">
    <source>
        <dbReference type="PDB" id="3BDL"/>
    </source>
</evidence>
<evidence type="ECO:0007829" key="30">
    <source>
        <dbReference type="PDB" id="4QMG"/>
    </source>
</evidence>
<evidence type="ECO:0007829" key="31">
    <source>
        <dbReference type="PDB" id="5M9O"/>
    </source>
</evidence>
<evidence type="ECO:0007829" key="32">
    <source>
        <dbReference type="PDB" id="7KNW"/>
    </source>
</evidence>
<protein>
    <recommendedName>
        <fullName>Staphylococcal nuclease domain-containing protein 1</fullName>
        <ecNumber evidence="9 10">3.1.31.1</ecNumber>
    </recommendedName>
    <alternativeName>
        <fullName>100 kDa coactivator</fullName>
    </alternativeName>
    <alternativeName>
        <fullName>EBNA2 coactivator p100</fullName>
    </alternativeName>
    <alternativeName>
        <fullName>Tudor domain-containing protein 11</fullName>
    </alternativeName>
    <alternativeName>
        <fullName>p100 co-activator</fullName>
    </alternativeName>
</protein>
<sequence length="910" mass="101997">MASSAQSGGSSGGPAVPTVQRGIIKMVLSGCAIIVRGQPRGGPPPERQINLSNIRAGNLARRAAATQPDAKDTPDEPWAFPAREFLRKKLIGKEVCFTIENKTPQGREYGMIYLGKDTNGENIAESLVAEGLATRREGMRANNPEQNRLSECEEQAKAAKKGMWSEGNGSHTIRDLKYTIENPRHFVDSHHQKPVNAIIEHVRDGSVVRALLLPDYYLVTVMLSGIKCPTFRREADGSETPEPFAAEAKFFTESRLLQRDVQIILESCHNQNILGTILHPNGNITELLLKEGFARCVDWSIAVYTRGAEKLRAAERFAKERRLRIWRDYVAPTANLDQKDKQFVAKVMQVLNADAIVVKLNSGDYKTIHLSSIRPPRLEGENTQDKNKKLRPLYDIPYMFEAREFLRKKLIGKKVNVTVDYIRPASPATETVPAFSERTCATVTIGGINIAEALVSKGLATVIRYRQDDDQRSSHYDELLAAEARAIKNGKGLHSKKEVPIHRVADISGDTQKAKQFLPFLQRAGRSEAVVEYVFSGSRLKLYLPKETCLITFLLAGIECPRGARNLPGLVQEGEPFSEEATLFTKELVLQREVEVEVESMDKAGNFIGWLHIDGANLSVLLVEHALSKVHFTAERSSYYKSLLSAEEAAKQKKEKVWAHYEEQPVEEVMPVLEEKERSASYKPVFVTEITDDLHFYVQDVETGTQLEKLMENMRNDIASHPPVEGSYAPRRGEFCIAKFVDGEWYRARVEKVESPAKIHVFYIDYGNREVLPSTRLGTLSPAFSTRVLPAQATEYAFAFIQVPQDDDARTDAVDSVVRDIQNTQCLLNVEHLSAGCPHVTLQFADSKGDVGLGLVKEGLVMVEVRKEKQFQKVITEYLNAQESAKSARLNLWRYGDFRADDADEFGYSR</sequence>
<name>SND1_HUMAN</name>
<dbReference type="EC" id="3.1.31.1" evidence="9 10"/>
<dbReference type="EMBL" id="U22055">
    <property type="protein sequence ID" value="AAA80488.1"/>
    <property type="status" value="ALT_SEQ"/>
    <property type="molecule type" value="mRNA"/>
</dbReference>
<dbReference type="EMBL" id="BT009785">
    <property type="protein sequence ID" value="AAP88787.1"/>
    <property type="molecule type" value="mRNA"/>
</dbReference>
<dbReference type="EMBL" id="BC017180">
    <property type="protein sequence ID" value="AAH17180.3"/>
    <property type="molecule type" value="mRNA"/>
</dbReference>
<dbReference type="CCDS" id="CCDS34747.1"/>
<dbReference type="PIR" id="I38968">
    <property type="entry name" value="I38968"/>
</dbReference>
<dbReference type="RefSeq" id="NP_055205.2">
    <property type="nucleotide sequence ID" value="NM_014390.4"/>
</dbReference>
<dbReference type="PDB" id="2E6N">
    <property type="method" value="NMR"/>
    <property type="chains" value="A=704-800"/>
</dbReference>
<dbReference type="PDB" id="2HQE">
    <property type="method" value="X-ray"/>
    <property type="resolution" value="2.00 A"/>
    <property type="chains" value="A/B=665-910"/>
</dbReference>
<dbReference type="PDB" id="2HQX">
    <property type="method" value="X-ray"/>
    <property type="resolution" value="1.42 A"/>
    <property type="chains" value="A/B=665-910"/>
</dbReference>
<dbReference type="PDB" id="2O4X">
    <property type="method" value="X-ray"/>
    <property type="resolution" value="2.00 A"/>
    <property type="chains" value="A=679-895, B=705-795"/>
</dbReference>
<dbReference type="PDB" id="3BDL">
    <property type="method" value="X-ray"/>
    <property type="resolution" value="1.90 A"/>
    <property type="chains" value="A=340-888"/>
</dbReference>
<dbReference type="PDB" id="3OMC">
    <property type="method" value="X-ray"/>
    <property type="resolution" value="1.77 A"/>
    <property type="chains" value="A/B=650-910"/>
</dbReference>
<dbReference type="PDB" id="3OMG">
    <property type="method" value="X-ray"/>
    <property type="resolution" value="1.85 A"/>
    <property type="chains" value="A/B=650-910"/>
</dbReference>
<dbReference type="PDB" id="4QMG">
    <property type="method" value="X-ray"/>
    <property type="resolution" value="2.70 A"/>
    <property type="chains" value="A/B/C/D/E=16-339"/>
</dbReference>
<dbReference type="PDB" id="5M9O">
    <property type="method" value="X-ray"/>
    <property type="resolution" value="1.45 A"/>
    <property type="chains" value="A=677-900"/>
</dbReference>
<dbReference type="PDB" id="7KNW">
    <property type="method" value="X-ray"/>
    <property type="resolution" value="2.65 A"/>
    <property type="chains" value="A/B/C/D=16-330"/>
</dbReference>
<dbReference type="PDB" id="7KNX">
    <property type="method" value="X-ray"/>
    <property type="resolution" value="2.70 A"/>
    <property type="chains" value="A/B/C/D=16-330"/>
</dbReference>
<dbReference type="PDBsum" id="2E6N"/>
<dbReference type="PDBsum" id="2HQE"/>
<dbReference type="PDBsum" id="2HQX"/>
<dbReference type="PDBsum" id="2O4X"/>
<dbReference type="PDBsum" id="3BDL"/>
<dbReference type="PDBsum" id="3OMC"/>
<dbReference type="PDBsum" id="3OMG"/>
<dbReference type="PDBsum" id="4QMG"/>
<dbReference type="PDBsum" id="5M9O"/>
<dbReference type="PDBsum" id="7KNW"/>
<dbReference type="PDBsum" id="7KNX"/>
<dbReference type="SMR" id="Q7KZF4"/>
<dbReference type="BioGRID" id="117974">
    <property type="interactions" value="367"/>
</dbReference>
<dbReference type="CORUM" id="Q7KZF4"/>
<dbReference type="DIP" id="DIP-29613N"/>
<dbReference type="ELM" id="Q7KZF4"/>
<dbReference type="FunCoup" id="Q7KZF4">
    <property type="interactions" value="3078"/>
</dbReference>
<dbReference type="IntAct" id="Q7KZF4">
    <property type="interactions" value="95"/>
</dbReference>
<dbReference type="MINT" id="Q7KZF4"/>
<dbReference type="STRING" id="9606.ENSP00000346762"/>
<dbReference type="ChEMBL" id="CHEMBL3879865"/>
<dbReference type="GlyCosmos" id="Q7KZF4">
    <property type="glycosylation" value="1 site, 1 glycan"/>
</dbReference>
<dbReference type="GlyGen" id="Q7KZF4">
    <property type="glycosylation" value="7 sites, 1 O-linked glycan (3 sites)"/>
</dbReference>
<dbReference type="iPTMnet" id="Q7KZF4"/>
<dbReference type="MetOSite" id="Q7KZF4"/>
<dbReference type="PhosphoSitePlus" id="Q7KZF4"/>
<dbReference type="SwissPalm" id="Q7KZF4"/>
<dbReference type="BioMuta" id="SND1"/>
<dbReference type="DMDM" id="60415926"/>
<dbReference type="REPRODUCTION-2DPAGE" id="IPI00140420"/>
<dbReference type="jPOST" id="Q7KZF4"/>
<dbReference type="MassIVE" id="Q7KZF4"/>
<dbReference type="PaxDb" id="9606-ENSP00000346762"/>
<dbReference type="PeptideAtlas" id="Q7KZF4"/>
<dbReference type="ProteomicsDB" id="68706"/>
<dbReference type="Pumba" id="Q7KZF4"/>
<dbReference type="Antibodypedia" id="1126">
    <property type="antibodies" value="295 antibodies from 33 providers"/>
</dbReference>
<dbReference type="DNASU" id="27044"/>
<dbReference type="Ensembl" id="ENST00000354725.8">
    <property type="protein sequence ID" value="ENSP00000346762.3"/>
    <property type="gene ID" value="ENSG00000197157.11"/>
</dbReference>
<dbReference type="GeneID" id="27044"/>
<dbReference type="KEGG" id="hsa:27044"/>
<dbReference type="MANE-Select" id="ENST00000354725.8">
    <property type="protein sequence ID" value="ENSP00000346762.3"/>
    <property type="RefSeq nucleotide sequence ID" value="NM_014390.4"/>
    <property type="RefSeq protein sequence ID" value="NP_055205.2"/>
</dbReference>
<dbReference type="UCSC" id="uc003vmi.4">
    <property type="organism name" value="human"/>
</dbReference>
<dbReference type="AGR" id="HGNC:30646"/>
<dbReference type="CTD" id="27044"/>
<dbReference type="DisGeNET" id="27044"/>
<dbReference type="GeneCards" id="SND1"/>
<dbReference type="HGNC" id="HGNC:30646">
    <property type="gene designation" value="SND1"/>
</dbReference>
<dbReference type="HPA" id="ENSG00000197157">
    <property type="expression patterns" value="Low tissue specificity"/>
</dbReference>
<dbReference type="MalaCards" id="SND1"/>
<dbReference type="MIM" id="602181">
    <property type="type" value="gene"/>
</dbReference>
<dbReference type="neXtProt" id="NX_Q7KZF4"/>
<dbReference type="OpenTargets" id="ENSG00000197157"/>
<dbReference type="PharmGKB" id="PA162404053"/>
<dbReference type="VEuPathDB" id="HostDB:ENSG00000197157"/>
<dbReference type="eggNOG" id="KOG2039">
    <property type="taxonomic scope" value="Eukaryota"/>
</dbReference>
<dbReference type="GeneTree" id="ENSGT00510000047270"/>
<dbReference type="HOGENOM" id="CLU_005966_0_0_1"/>
<dbReference type="InParanoid" id="Q7KZF4"/>
<dbReference type="OMA" id="ARCADHH"/>
<dbReference type="OrthoDB" id="10023235at2759"/>
<dbReference type="PAN-GO" id="Q7KZF4">
    <property type="GO annotations" value="5 GO annotations based on evolutionary models"/>
</dbReference>
<dbReference type="PhylomeDB" id="Q7KZF4"/>
<dbReference type="TreeFam" id="TF300615"/>
<dbReference type="BRENDA" id="3.1.31.1">
    <property type="organism ID" value="2681"/>
</dbReference>
<dbReference type="PathwayCommons" id="Q7KZF4"/>
<dbReference type="Reactome" id="R-HSA-6802952">
    <property type="pathway name" value="Signaling by BRAF and RAF1 fusions"/>
</dbReference>
<dbReference type="SignaLink" id="Q7KZF4"/>
<dbReference type="SIGNOR" id="Q7KZF4"/>
<dbReference type="BioGRID-ORCS" id="27044">
    <property type="hits" value="20 hits in 1165 CRISPR screens"/>
</dbReference>
<dbReference type="CD-CODE" id="232F8A39">
    <property type="entry name" value="P-body"/>
</dbReference>
<dbReference type="CD-CODE" id="91857CE7">
    <property type="entry name" value="Nucleolus"/>
</dbReference>
<dbReference type="CD-CODE" id="DEE660B4">
    <property type="entry name" value="Stress granule"/>
</dbReference>
<dbReference type="CD-CODE" id="FB4E32DD">
    <property type="entry name" value="Presynaptic clusters and postsynaptic densities"/>
</dbReference>
<dbReference type="ChiTaRS" id="SND1">
    <property type="organism name" value="human"/>
</dbReference>
<dbReference type="EvolutionaryTrace" id="Q7KZF4"/>
<dbReference type="GeneWiki" id="SND1"/>
<dbReference type="GenomeRNAi" id="27044"/>
<dbReference type="Pharos" id="Q7KZF4">
    <property type="development level" value="Tbio"/>
</dbReference>
<dbReference type="PRO" id="PR:Q7KZF4"/>
<dbReference type="Proteomes" id="UP000005640">
    <property type="component" value="Chromosome 7"/>
</dbReference>
<dbReference type="RNAct" id="Q7KZF4">
    <property type="molecule type" value="protein"/>
</dbReference>
<dbReference type="Bgee" id="ENSG00000197157">
    <property type="expression patterns" value="Expressed in body of pancreas and 208 other cell types or tissues"/>
</dbReference>
<dbReference type="ExpressionAtlas" id="Q7KZF4">
    <property type="expression patterns" value="baseline and differential"/>
</dbReference>
<dbReference type="GO" id="GO:0005829">
    <property type="term" value="C:cytosol"/>
    <property type="evidence" value="ECO:0000314"/>
    <property type="project" value="HPA"/>
</dbReference>
<dbReference type="GO" id="GO:0097433">
    <property type="term" value="C:dense body"/>
    <property type="evidence" value="ECO:0007669"/>
    <property type="project" value="Ensembl"/>
</dbReference>
<dbReference type="GO" id="GO:0070062">
    <property type="term" value="C:extracellular exosome"/>
    <property type="evidence" value="ECO:0007005"/>
    <property type="project" value="UniProtKB"/>
</dbReference>
<dbReference type="GO" id="GO:0042470">
    <property type="term" value="C:melanosome"/>
    <property type="evidence" value="ECO:0007669"/>
    <property type="project" value="UniProtKB-SubCell"/>
</dbReference>
<dbReference type="GO" id="GO:0016020">
    <property type="term" value="C:membrane"/>
    <property type="evidence" value="ECO:0007005"/>
    <property type="project" value="UniProtKB"/>
</dbReference>
<dbReference type="GO" id="GO:0005634">
    <property type="term" value="C:nucleus"/>
    <property type="evidence" value="ECO:0000318"/>
    <property type="project" value="GO_Central"/>
</dbReference>
<dbReference type="GO" id="GO:0031332">
    <property type="term" value="C:RNAi effector complex"/>
    <property type="evidence" value="ECO:0007669"/>
    <property type="project" value="InterPro"/>
</dbReference>
<dbReference type="GO" id="GO:0045296">
    <property type="term" value="F:cadherin binding"/>
    <property type="evidence" value="ECO:0007005"/>
    <property type="project" value="BHF-UCL"/>
</dbReference>
<dbReference type="GO" id="GO:0004519">
    <property type="term" value="F:endonuclease activity"/>
    <property type="evidence" value="ECO:0000314"/>
    <property type="project" value="UniProtKB"/>
</dbReference>
<dbReference type="GO" id="GO:0016894">
    <property type="term" value="F:endonuclease activity, active with either ribo- or deoxyribonucleic acids and producing 3'-phosphomonoesters"/>
    <property type="evidence" value="ECO:0007669"/>
    <property type="project" value="UniProtKB-EC"/>
</dbReference>
<dbReference type="GO" id="GO:0004518">
    <property type="term" value="F:nuclease activity"/>
    <property type="evidence" value="ECO:0000318"/>
    <property type="project" value="GO_Central"/>
</dbReference>
<dbReference type="GO" id="GO:1905172">
    <property type="term" value="F:RISC complex binding"/>
    <property type="evidence" value="ECO:0000314"/>
    <property type="project" value="UniProtKB"/>
</dbReference>
<dbReference type="GO" id="GO:0003723">
    <property type="term" value="F:RNA binding"/>
    <property type="evidence" value="ECO:0000314"/>
    <property type="project" value="UniProtKB"/>
</dbReference>
<dbReference type="GO" id="GO:0004521">
    <property type="term" value="F:RNA endonuclease activity"/>
    <property type="evidence" value="ECO:0000314"/>
    <property type="project" value="UniProtKB"/>
</dbReference>
<dbReference type="GO" id="GO:0003712">
    <property type="term" value="F:transcription coregulator activity"/>
    <property type="evidence" value="ECO:0000304"/>
    <property type="project" value="ProtInc"/>
</dbReference>
<dbReference type="GO" id="GO:0010587">
    <property type="term" value="P:miRNA catabolic process"/>
    <property type="evidence" value="ECO:0000314"/>
    <property type="project" value="UniProtKB"/>
</dbReference>
<dbReference type="GO" id="GO:0006402">
    <property type="term" value="P:mRNA catabolic process"/>
    <property type="evidence" value="ECO:0000318"/>
    <property type="project" value="GO_Central"/>
</dbReference>
<dbReference type="GO" id="GO:0001649">
    <property type="term" value="P:osteoblast differentiation"/>
    <property type="evidence" value="ECO:0007005"/>
    <property type="project" value="UniProtKB"/>
</dbReference>
<dbReference type="GO" id="GO:0010564">
    <property type="term" value="P:regulation of cell cycle process"/>
    <property type="evidence" value="ECO:0000315"/>
    <property type="project" value="UniProtKB"/>
</dbReference>
<dbReference type="GO" id="GO:0031047">
    <property type="term" value="P:regulatory ncRNA-mediated gene silencing"/>
    <property type="evidence" value="ECO:0007669"/>
    <property type="project" value="InterPro"/>
</dbReference>
<dbReference type="CDD" id="cd00175">
    <property type="entry name" value="SNc"/>
    <property type="match status" value="4"/>
</dbReference>
<dbReference type="CDD" id="cd20433">
    <property type="entry name" value="Tudor_TDRD11"/>
    <property type="match status" value="1"/>
</dbReference>
<dbReference type="FunFam" id="2.30.30.140:FF:000047">
    <property type="entry name" value="Staphylococcal nuclease domain-containing protein"/>
    <property type="match status" value="1"/>
</dbReference>
<dbReference type="FunFam" id="2.40.50.90:FF:000001">
    <property type="entry name" value="Staphylococcal nuclease domain-containing protein"/>
    <property type="match status" value="1"/>
</dbReference>
<dbReference type="FunFam" id="2.40.50.90:FF:000002">
    <property type="entry name" value="Staphylococcal nuclease domain-containing protein"/>
    <property type="match status" value="1"/>
</dbReference>
<dbReference type="FunFam" id="2.40.50.90:FF:000003">
    <property type="entry name" value="Staphylococcal nuclease domain-containing protein"/>
    <property type="match status" value="1"/>
</dbReference>
<dbReference type="FunFam" id="2.40.50.90:FF:000004">
    <property type="entry name" value="Staphylococcal nuclease domain-containing protein"/>
    <property type="match status" value="1"/>
</dbReference>
<dbReference type="FunFam" id="2.40.50.90:FF:000005">
    <property type="entry name" value="Staphylococcal nuclease domain-containing protein"/>
    <property type="match status" value="1"/>
</dbReference>
<dbReference type="Gene3D" id="2.30.30.140">
    <property type="match status" value="1"/>
</dbReference>
<dbReference type="Gene3D" id="2.40.50.90">
    <property type="match status" value="5"/>
</dbReference>
<dbReference type="InterPro" id="IPR016685">
    <property type="entry name" value="Silence_cplx_Nase-comp_TudorSN"/>
</dbReference>
<dbReference type="InterPro" id="IPR035437">
    <property type="entry name" value="SNase_OB-fold_sf"/>
</dbReference>
<dbReference type="InterPro" id="IPR016071">
    <property type="entry name" value="Staphylococal_nuclease_OB-fold"/>
</dbReference>
<dbReference type="InterPro" id="IPR002071">
    <property type="entry name" value="Thermonucl_AS"/>
</dbReference>
<dbReference type="InterPro" id="IPR002999">
    <property type="entry name" value="Tudor"/>
</dbReference>
<dbReference type="InterPro" id="IPR047386">
    <property type="entry name" value="Tudor_TDRD11"/>
</dbReference>
<dbReference type="PANTHER" id="PTHR12302">
    <property type="entry name" value="EBNA2 BINDING PROTEIN P100"/>
    <property type="match status" value="1"/>
</dbReference>
<dbReference type="PANTHER" id="PTHR12302:SF2">
    <property type="entry name" value="STAPHYLOCOCCAL NUCLEASE DOMAIN-CONTAINING PROTEIN 1"/>
    <property type="match status" value="1"/>
</dbReference>
<dbReference type="Pfam" id="PF00565">
    <property type="entry name" value="SNase"/>
    <property type="match status" value="5"/>
</dbReference>
<dbReference type="Pfam" id="PF00567">
    <property type="entry name" value="TUDOR"/>
    <property type="match status" value="1"/>
</dbReference>
<dbReference type="PIRSF" id="PIRSF017179">
    <property type="entry name" value="RISC-Tudor-SN"/>
    <property type="match status" value="1"/>
</dbReference>
<dbReference type="SMART" id="SM00318">
    <property type="entry name" value="SNc"/>
    <property type="match status" value="4"/>
</dbReference>
<dbReference type="SMART" id="SM00333">
    <property type="entry name" value="TUDOR"/>
    <property type="match status" value="1"/>
</dbReference>
<dbReference type="SUPFAM" id="SSF50199">
    <property type="entry name" value="Staphylococcal nuclease"/>
    <property type="match status" value="5"/>
</dbReference>
<dbReference type="SUPFAM" id="SSF63748">
    <property type="entry name" value="Tudor/PWWP/MBT"/>
    <property type="match status" value="1"/>
</dbReference>
<dbReference type="PROSITE" id="PS01284">
    <property type="entry name" value="TNASE_2"/>
    <property type="match status" value="1"/>
</dbReference>
<dbReference type="PROSITE" id="PS50830">
    <property type="entry name" value="TNASE_3"/>
    <property type="match status" value="4"/>
</dbReference>
<dbReference type="PROSITE" id="PS50304">
    <property type="entry name" value="TUDOR"/>
    <property type="match status" value="1"/>
</dbReference>
<organism>
    <name type="scientific">Homo sapiens</name>
    <name type="common">Human</name>
    <dbReference type="NCBI Taxonomy" id="9606"/>
    <lineage>
        <taxon>Eukaryota</taxon>
        <taxon>Metazoa</taxon>
        <taxon>Chordata</taxon>
        <taxon>Craniata</taxon>
        <taxon>Vertebrata</taxon>
        <taxon>Euteleostomi</taxon>
        <taxon>Mammalia</taxon>
        <taxon>Eutheria</taxon>
        <taxon>Euarchontoglires</taxon>
        <taxon>Primates</taxon>
        <taxon>Haplorrhini</taxon>
        <taxon>Catarrhini</taxon>
        <taxon>Hominidae</taxon>
        <taxon>Homo</taxon>
    </lineage>
</organism>
<feature type="initiator methionine" description="Removed" evidence="14 17 21 22 25">
    <location>
        <position position="1"/>
    </location>
</feature>
<feature type="chain" id="PRO_0000183180" description="Staphylococcal nuclease domain-containing protein 1">
    <location>
        <begin position="2"/>
        <end position="910"/>
    </location>
</feature>
<feature type="domain" description="TNase-like 1" evidence="4">
    <location>
        <begin position="18"/>
        <end position="166"/>
    </location>
</feature>
<feature type="domain" description="TNase-like 2" evidence="4">
    <location>
        <begin position="193"/>
        <end position="328"/>
    </location>
</feature>
<feature type="domain" description="TNase-like 3" evidence="4">
    <location>
        <begin position="341"/>
        <end position="496"/>
    </location>
</feature>
<feature type="domain" description="TNase-like 4" evidence="4">
    <location>
        <begin position="525"/>
        <end position="660"/>
    </location>
</feature>
<feature type="domain" description="Tudor" evidence="3">
    <location>
        <begin position="729"/>
        <end position="787"/>
    </location>
</feature>
<feature type="short sequence motif" description="Nuclear localization signal" evidence="2">
    <location>
        <begin position="321"/>
        <end position="325"/>
    </location>
</feature>
<feature type="short sequence motif" description="Nuclear localization signal" evidence="2">
    <location>
        <begin position="388"/>
        <end position="392"/>
    </location>
</feature>
<feature type="modified residue" description="N-acetylalanine" evidence="14 17 21 22 25">
    <location>
        <position position="2"/>
    </location>
</feature>
<feature type="modified residue" description="Phosphothreonine" evidence="23">
    <location>
        <position position="103"/>
    </location>
</feature>
<feature type="modified residue" description="N6-acetyllysine" evidence="18">
    <location>
        <position position="193"/>
    </location>
</feature>
<feature type="modified residue" description="Phosphothreonine" evidence="23">
    <location>
        <position position="240"/>
    </location>
</feature>
<feature type="modified residue" description="Phosphoserine" evidence="23 24">
    <location>
        <position position="426"/>
    </location>
</feature>
<feature type="modified residue" description="N6-acetyllysine" evidence="18">
    <location>
        <position position="641"/>
    </location>
</feature>
<feature type="modified residue" description="Phosphoserine" evidence="23">
    <location>
        <position position="645"/>
    </location>
</feature>
<feature type="modified residue" description="Phosphothreonine" evidence="23 24">
    <location>
        <position position="779"/>
    </location>
</feature>
<feature type="modified residue" description="Phosphoserine" evidence="20 23 24">
    <location>
        <position position="781"/>
    </location>
</feature>
<feature type="modified residue" description="Phosphoserine" evidence="23">
    <location>
        <position position="785"/>
    </location>
</feature>
<feature type="modified residue" description="Phosphoserine" evidence="19 23 24">
    <location>
        <position position="909"/>
    </location>
</feature>
<feature type="cross-link" description="Glycyl lysine isopeptide (Lys-Gly) (interchain with G-Cter in SUMO2)" evidence="26">
    <location>
        <position position="513"/>
    </location>
</feature>
<feature type="sequence conflict" description="In Ref. 1; AAA80488." evidence="15" ref="1">
    <original>L</original>
    <variation>V</variation>
    <location>
        <position position="274"/>
    </location>
</feature>
<feature type="sequence conflict" description="In Ref. 1; AAA80488." evidence="15" ref="1">
    <original>LE</original>
    <variation>FQ</variation>
    <location>
        <begin position="707"/>
        <end position="708"/>
    </location>
</feature>
<feature type="strand" evidence="32">
    <location>
        <begin position="20"/>
        <end position="27"/>
    </location>
</feature>
<feature type="helix" evidence="32">
    <location>
        <begin position="29"/>
        <end position="31"/>
    </location>
</feature>
<feature type="strand" evidence="32">
    <location>
        <begin position="33"/>
        <end position="36"/>
    </location>
</feature>
<feature type="strand" evidence="32">
    <location>
        <begin position="40"/>
        <end position="43"/>
    </location>
</feature>
<feature type="strand" evidence="32">
    <location>
        <begin position="46"/>
        <end position="51"/>
    </location>
</feature>
<feature type="strand" evidence="30">
    <location>
        <begin position="54"/>
        <end position="56"/>
    </location>
</feature>
<feature type="strand" evidence="32">
    <location>
        <begin position="61"/>
        <end position="64"/>
    </location>
</feature>
<feature type="strand" evidence="32">
    <location>
        <begin position="71"/>
        <end position="73"/>
    </location>
</feature>
<feature type="helix" evidence="32">
    <location>
        <begin position="79"/>
        <end position="90"/>
    </location>
</feature>
<feature type="strand" evidence="32">
    <location>
        <begin position="94"/>
        <end position="102"/>
    </location>
</feature>
<feature type="strand" evidence="32">
    <location>
        <begin position="108"/>
        <end position="117"/>
    </location>
</feature>
<feature type="strand" evidence="32">
    <location>
        <begin position="120"/>
        <end position="122"/>
    </location>
</feature>
<feature type="helix" evidence="32">
    <location>
        <begin position="123"/>
        <end position="129"/>
    </location>
</feature>
<feature type="strand" evidence="30">
    <location>
        <begin position="132"/>
        <end position="135"/>
    </location>
</feature>
<feature type="helix" evidence="32">
    <location>
        <begin position="144"/>
        <end position="159"/>
    </location>
</feature>
<feature type="helix" evidence="32">
    <location>
        <begin position="162"/>
        <end position="164"/>
    </location>
</feature>
<feature type="strand" evidence="32">
    <location>
        <begin position="165"/>
        <end position="167"/>
    </location>
</feature>
<feature type="helix" evidence="32">
    <location>
        <begin position="170"/>
        <end position="172"/>
    </location>
</feature>
<feature type="strand" evidence="32">
    <location>
        <begin position="177"/>
        <end position="179"/>
    </location>
</feature>
<feature type="helix" evidence="32">
    <location>
        <begin position="183"/>
        <end position="189"/>
    </location>
</feature>
<feature type="turn" evidence="32">
    <location>
        <begin position="190"/>
        <end position="192"/>
    </location>
</feature>
<feature type="strand" evidence="32">
    <location>
        <begin position="195"/>
        <end position="204"/>
    </location>
</feature>
<feature type="strand" evidence="32">
    <location>
        <begin position="207"/>
        <end position="212"/>
    </location>
</feature>
<feature type="turn" evidence="32">
    <location>
        <begin position="213"/>
        <end position="216"/>
    </location>
</feature>
<feature type="strand" evidence="32">
    <location>
        <begin position="217"/>
        <end position="223"/>
    </location>
</feature>
<feature type="helix" evidence="32">
    <location>
        <begin position="245"/>
        <end position="256"/>
    </location>
</feature>
<feature type="strand" evidence="32">
    <location>
        <begin position="260"/>
        <end position="269"/>
    </location>
</feature>
<feature type="strand" evidence="32">
    <location>
        <begin position="272"/>
        <end position="279"/>
    </location>
</feature>
<feature type="helix" evidence="32">
    <location>
        <begin position="284"/>
        <end position="290"/>
    </location>
</feature>
<feature type="turn" evidence="32">
    <location>
        <begin position="298"/>
        <end position="300"/>
    </location>
</feature>
<feature type="helix" evidence="30">
    <location>
        <begin position="301"/>
        <end position="303"/>
    </location>
</feature>
<feature type="helix" evidence="32">
    <location>
        <begin position="308"/>
        <end position="320"/>
    </location>
</feature>
<feature type="helix" evidence="32">
    <location>
        <begin position="324"/>
        <end position="326"/>
    </location>
</feature>
<feature type="strand" evidence="29">
    <location>
        <begin position="341"/>
        <end position="351"/>
    </location>
</feature>
<feature type="turn" evidence="29">
    <location>
        <begin position="352"/>
        <end position="354"/>
    </location>
</feature>
<feature type="strand" evidence="29">
    <location>
        <begin position="355"/>
        <end position="359"/>
    </location>
</feature>
<feature type="strand" evidence="29">
    <location>
        <begin position="365"/>
        <end position="370"/>
    </location>
</feature>
<feature type="helix" evidence="29">
    <location>
        <begin position="384"/>
        <end position="386"/>
    </location>
</feature>
<feature type="turn" evidence="29">
    <location>
        <begin position="387"/>
        <end position="389"/>
    </location>
</feature>
<feature type="helix" evidence="29">
    <location>
        <begin position="392"/>
        <end position="395"/>
    </location>
</feature>
<feature type="helix" evidence="29">
    <location>
        <begin position="399"/>
        <end position="410"/>
    </location>
</feature>
<feature type="strand" evidence="29">
    <location>
        <begin position="414"/>
        <end position="425"/>
    </location>
</feature>
<feature type="strand" evidence="29">
    <location>
        <begin position="432"/>
        <end position="435"/>
    </location>
</feature>
<feature type="strand" evidence="29">
    <location>
        <begin position="438"/>
        <end position="445"/>
    </location>
</feature>
<feature type="helix" evidence="29">
    <location>
        <begin position="450"/>
        <end position="456"/>
    </location>
</feature>
<feature type="strand" evidence="29">
    <location>
        <begin position="459"/>
        <end position="462"/>
    </location>
</feature>
<feature type="helix" evidence="29">
    <location>
        <begin position="476"/>
        <end position="488"/>
    </location>
</feature>
<feature type="helix" evidence="29">
    <location>
        <begin position="492"/>
        <end position="494"/>
    </location>
</feature>
<feature type="helix" evidence="29">
    <location>
        <begin position="511"/>
        <end position="523"/>
    </location>
</feature>
<feature type="strand" evidence="29">
    <location>
        <begin position="526"/>
        <end position="544"/>
    </location>
</feature>
<feature type="turn" evidence="29">
    <location>
        <begin position="545"/>
        <end position="548"/>
    </location>
</feature>
<feature type="strand" evidence="29">
    <location>
        <begin position="549"/>
        <end position="559"/>
    </location>
</feature>
<feature type="strand" evidence="29">
    <location>
        <begin position="565"/>
        <end position="567"/>
    </location>
</feature>
<feature type="strand" evidence="29">
    <location>
        <begin position="570"/>
        <end position="572"/>
    </location>
</feature>
<feature type="helix" evidence="29">
    <location>
        <begin position="578"/>
        <end position="589"/>
    </location>
</feature>
<feature type="strand" evidence="29">
    <location>
        <begin position="593"/>
        <end position="601"/>
    </location>
</feature>
<feature type="strand" evidence="29">
    <location>
        <begin position="607"/>
        <end position="613"/>
    </location>
</feature>
<feature type="helix" evidence="29">
    <location>
        <begin position="618"/>
        <end position="624"/>
    </location>
</feature>
<feature type="strand" evidence="29">
    <location>
        <begin position="627"/>
        <end position="630"/>
    </location>
</feature>
<feature type="helix" evidence="29">
    <location>
        <begin position="632"/>
        <end position="634"/>
    </location>
</feature>
<feature type="helix" evidence="29">
    <location>
        <begin position="640"/>
        <end position="653"/>
    </location>
</feature>
<feature type="helix" evidence="29">
    <location>
        <begin position="656"/>
        <end position="658"/>
    </location>
</feature>
<feature type="strand" evidence="31">
    <location>
        <begin position="683"/>
        <end position="690"/>
    </location>
</feature>
<feature type="strand" evidence="31">
    <location>
        <begin position="694"/>
        <end position="700"/>
    </location>
</feature>
<feature type="helix" evidence="31">
    <location>
        <begin position="701"/>
        <end position="703"/>
    </location>
</feature>
<feature type="helix" evidence="28">
    <location>
        <begin position="706"/>
        <end position="720"/>
    </location>
</feature>
<feature type="turn" evidence="28">
    <location>
        <begin position="725"/>
        <end position="727"/>
    </location>
</feature>
<feature type="strand" evidence="28">
    <location>
        <begin position="735"/>
        <end position="739"/>
    </location>
</feature>
<feature type="turn" evidence="27">
    <location>
        <begin position="741"/>
        <end position="743"/>
    </location>
</feature>
<feature type="strand" evidence="28">
    <location>
        <begin position="745"/>
        <end position="755"/>
    </location>
</feature>
<feature type="strand" evidence="28">
    <location>
        <begin position="758"/>
        <end position="763"/>
    </location>
</feature>
<feature type="turn" evidence="28">
    <location>
        <begin position="764"/>
        <end position="766"/>
    </location>
</feature>
<feature type="strand" evidence="28">
    <location>
        <begin position="769"/>
        <end position="772"/>
    </location>
</feature>
<feature type="helix" evidence="28">
    <location>
        <begin position="774"/>
        <end position="776"/>
    </location>
</feature>
<feature type="strand" evidence="31">
    <location>
        <begin position="777"/>
        <end position="779"/>
    </location>
</feature>
<feature type="helix" evidence="28">
    <location>
        <begin position="782"/>
        <end position="784"/>
    </location>
</feature>
<feature type="turn" evidence="28">
    <location>
        <begin position="786"/>
        <end position="788"/>
    </location>
</feature>
<feature type="strand" evidence="31">
    <location>
        <begin position="794"/>
        <end position="798"/>
    </location>
</feature>
<feature type="helix" evidence="31">
    <location>
        <begin position="807"/>
        <end position="821"/>
    </location>
</feature>
<feature type="strand" evidence="31">
    <location>
        <begin position="824"/>
        <end position="832"/>
    </location>
</feature>
<feature type="strand" evidence="31">
    <location>
        <begin position="835"/>
        <end position="837"/>
    </location>
</feature>
<feature type="strand" evidence="31">
    <location>
        <begin position="839"/>
        <end position="844"/>
    </location>
</feature>
<feature type="turn" evidence="31">
    <location>
        <begin position="845"/>
        <end position="847"/>
    </location>
</feature>
<feature type="helix" evidence="31">
    <location>
        <begin position="851"/>
        <end position="857"/>
    </location>
</feature>
<feature type="strand" evidence="31">
    <location>
        <begin position="860"/>
        <end position="863"/>
    </location>
</feature>
<feature type="helix" evidence="31">
    <location>
        <begin position="869"/>
        <end position="871"/>
    </location>
</feature>
<feature type="helix" evidence="31">
    <location>
        <begin position="872"/>
        <end position="887"/>
    </location>
</feature>
<feature type="helix" evidence="31">
    <location>
        <begin position="891"/>
        <end position="893"/>
    </location>
</feature>
<gene>
    <name type="primary">SND1</name>
    <name type="synonym">TDRD11</name>
</gene>
<reference key="1">
    <citation type="journal article" date="1995" name="Mol. Cell. Biol.">
        <title>The Epstein-Barr virus nuclear protein 2 acidic domain forms a complex with a novel cellular coactivator that can interact with TFIIE.</title>
        <authorList>
            <person name="Tong X."/>
            <person name="Drapkin R."/>
            <person name="Yalamanchili R."/>
            <person name="Mosialos G."/>
            <person name="Kieff E."/>
        </authorList>
    </citation>
    <scope>NUCLEOTIDE SEQUENCE [MRNA]</scope>
    <scope>PROTEIN SEQUENCE OF 234-249; 567-586; 642-651; 679-704 AND 788-818</scope>
    <scope>FUNCTION (MICROBIAL INFECTION)</scope>
    <scope>INTERACTION WITH EBNA2 (MICROBIAL INFECTION)</scope>
    <scope>INTERACTION WITH GTF2E1 AND GTF2E2</scope>
    <scope>SUBCELLULAR LOCATION</scope>
    <scope>TISSUE SPECIFICITY</scope>
</reference>
<reference key="2">
    <citation type="submission" date="2003-08" db="EMBL/GenBank/DDBJ databases">
        <title>Cloning of human full-length CDSs in BD Creator(TM) system donor vector.</title>
        <authorList>
            <person name="Kalnine N."/>
            <person name="Chen X."/>
            <person name="Rolfs A."/>
            <person name="Halleck A."/>
            <person name="Hines L."/>
            <person name="Eisenstein S."/>
            <person name="Koundinya M."/>
            <person name="Raphael J."/>
            <person name="Moreira D."/>
            <person name="Kelley T."/>
            <person name="LaBaer J."/>
            <person name="Lin Y."/>
            <person name="Phelan M."/>
            <person name="Farmer A."/>
        </authorList>
    </citation>
    <scope>NUCLEOTIDE SEQUENCE [LARGE SCALE MRNA]</scope>
</reference>
<reference key="3">
    <citation type="journal article" date="2004" name="Genome Res.">
        <title>The status, quality, and expansion of the NIH full-length cDNA project: the Mammalian Gene Collection (MGC).</title>
        <authorList>
            <consortium name="The MGC Project Team"/>
        </authorList>
    </citation>
    <scope>NUCLEOTIDE SEQUENCE [LARGE SCALE MRNA]</scope>
    <source>
        <tissue>Lymph</tissue>
    </source>
</reference>
<reference key="4">
    <citation type="submission" date="2008-12" db="UniProtKB">
        <authorList>
            <person name="Bienvenut W.V."/>
            <person name="Zebisch A."/>
            <person name="Kolch W."/>
        </authorList>
    </citation>
    <scope>PROTEIN SEQUENCE OF 2-21; 48-55; 72-83; 108-136; 178-184; 328-339; 347-359; 516-523; 527-539; 642-651; 716-731; 777-787; 811-819 AND 874-886</scope>
    <scope>CLEAVAGE OF INITIATOR METHIONINE</scope>
    <scope>ACETYLATION AT ALA-2</scope>
    <scope>IDENTIFICATION BY MASS SPECTROMETRY</scope>
    <source>
        <tissue>Colon carcinoma</tissue>
    </source>
</reference>
<reference key="5">
    <citation type="journal article" date="2002" name="EMBO J.">
        <title>Identification of p100 as a coactivator for STAT6 that bridges STAT6 with RNA polymerase II.</title>
        <authorList>
            <person name="Yang J."/>
            <person name="Aittomaeki S."/>
            <person name="Pesu M."/>
            <person name="Carter K."/>
            <person name="Saarinen J."/>
            <person name="Kalkkinen N."/>
            <person name="Kieff E."/>
            <person name="Silvennoinen O."/>
        </authorList>
    </citation>
    <scope>FUNCTION</scope>
    <scope>INTERACTION WITH STAT6 AND POLR2A</scope>
    <scope>SUBCELLULAR LOCATION</scope>
</reference>
<reference key="6">
    <citation type="journal article" date="1998" name="Mol. Cell">
        <title>Pim-1 kinase and p100 cooperate to enhance c-Myb activity.</title>
        <authorList>
            <person name="Leverson J.D."/>
            <person name="Koskinen P.J."/>
            <person name="Orrico F.C."/>
            <person name="Rainio E.-M."/>
            <person name="Jalkanen K.J."/>
            <person name="Dash A.B."/>
            <person name="Eisenman R.N."/>
            <person name="Ness S.A."/>
        </authorList>
    </citation>
    <scope>FUNCTION</scope>
    <scope>INTERACTION WITH PIM1</scope>
    <scope>PHOSPHORYLATION BY PIM1</scope>
</reference>
<reference key="7">
    <citation type="journal article" date="2003" name="J. Gen. Virol.">
        <title>Equine arteritis virus non-structural protein 1, an essential factor for viral subgenomic mRNA synthesis, interacts with the cellular transcription co-factor p100.</title>
        <authorList>
            <person name="Tijms M.A."/>
            <person name="Snijder E.J."/>
        </authorList>
    </citation>
    <scope>INTERACTION WITH EAV NSP1 (MICROBIAL INFECTION)</scope>
</reference>
<reference key="8">
    <citation type="journal article" date="2003" name="Nature">
        <title>A micrococcal nuclease homologue in RNAi effector complexes.</title>
        <authorList>
            <person name="Caudy A.A."/>
            <person name="Ketting R.F."/>
            <person name="Hammond S.M."/>
            <person name="Denli A.M."/>
            <person name="Bathoorn A.M."/>
            <person name="Tops B.B."/>
            <person name="Silva J.M."/>
            <person name="Myers M.M."/>
            <person name="Hannon G.J."/>
            <person name="Plasterk R.H."/>
        </authorList>
    </citation>
    <scope>ASSOCIATION WITH THE RISC COMPLEX</scope>
    <scope>INTERACTION WITH AGO2 AND FMR1</scope>
    <scope>SUBCELLULAR LOCATION</scope>
</reference>
<reference key="9">
    <citation type="journal article" date="2005" name="Nat. Biotechnol.">
        <title>Immunoaffinity profiling of tyrosine phosphorylation in cancer cells.</title>
        <authorList>
            <person name="Rush J."/>
            <person name="Moritz A."/>
            <person name="Lee K.A."/>
            <person name="Guo A."/>
            <person name="Goss V.L."/>
            <person name="Spek E.J."/>
            <person name="Zhang H."/>
            <person name="Zha X.-M."/>
            <person name="Polakiewicz R.D."/>
            <person name="Comb M.J."/>
        </authorList>
    </citation>
    <scope>IDENTIFICATION BY MASS SPECTROMETRY [LARGE SCALE ANALYSIS]</scope>
</reference>
<reference key="10">
    <citation type="journal article" date="2006" name="Cell">
        <title>Global, in vivo, and site-specific phosphorylation dynamics in signaling networks.</title>
        <authorList>
            <person name="Olsen J.V."/>
            <person name="Blagoev B."/>
            <person name="Gnad F."/>
            <person name="Macek B."/>
            <person name="Kumar C."/>
            <person name="Mortensen P."/>
            <person name="Mann M."/>
        </authorList>
    </citation>
    <scope>IDENTIFICATION BY MASS SPECTROMETRY [LARGE SCALE ANALYSIS]</scope>
    <source>
        <tissue>Cervix carcinoma</tissue>
    </source>
</reference>
<reference key="11">
    <citation type="journal article" date="2006" name="J. Proteome Res.">
        <title>Proteomic and bioinformatic characterization of the biogenesis and function of melanosomes.</title>
        <authorList>
            <person name="Chi A."/>
            <person name="Valencia J.C."/>
            <person name="Hu Z.-Z."/>
            <person name="Watabe H."/>
            <person name="Yamaguchi H."/>
            <person name="Mangini N.J."/>
            <person name="Huang H."/>
            <person name="Canfield V.A."/>
            <person name="Cheng K.C."/>
            <person name="Yang F."/>
            <person name="Abe R."/>
            <person name="Yamagishi S."/>
            <person name="Shabanowitz J."/>
            <person name="Hearing V.J."/>
            <person name="Wu C."/>
            <person name="Appella E."/>
            <person name="Hunt D.F."/>
        </authorList>
    </citation>
    <scope>SUBCELLULAR LOCATION [LARGE SCALE ANALYSIS]</scope>
    <source>
        <tissue>Melanoma</tissue>
    </source>
</reference>
<reference key="12">
    <citation type="journal article" date="2008" name="Proc. Natl. Acad. Sci. U.S.A.">
        <title>A quantitative atlas of mitotic phosphorylation.</title>
        <authorList>
            <person name="Dephoure N."/>
            <person name="Zhou C."/>
            <person name="Villen J."/>
            <person name="Beausoleil S.A."/>
            <person name="Bakalarski C.E."/>
            <person name="Elledge S.J."/>
            <person name="Gygi S.P."/>
        </authorList>
    </citation>
    <scope>IDENTIFICATION BY MASS SPECTROMETRY [LARGE SCALE ANALYSIS]</scope>
    <source>
        <tissue>Cervix carcinoma</tissue>
    </source>
</reference>
<reference key="13">
    <citation type="journal article" date="2009" name="Anal. Chem.">
        <title>Lys-N and trypsin cover complementary parts of the phosphoproteome in a refined SCX-based approach.</title>
        <authorList>
            <person name="Gauci S."/>
            <person name="Helbig A.O."/>
            <person name="Slijper M."/>
            <person name="Krijgsveld J."/>
            <person name="Heck A.J."/>
            <person name="Mohammed S."/>
        </authorList>
    </citation>
    <scope>ACETYLATION [LARGE SCALE ANALYSIS] AT ALA-2</scope>
    <scope>CLEAVAGE OF INITIATOR METHIONINE [LARGE SCALE ANALYSIS]</scope>
    <scope>IDENTIFICATION BY MASS SPECTROMETRY [LARGE SCALE ANALYSIS]</scope>
</reference>
<reference key="14">
    <citation type="journal article" date="2009" name="Sci. Signal.">
        <title>Quantitative phosphoproteomic analysis of T cell receptor signaling reveals system-wide modulation of protein-protein interactions.</title>
        <authorList>
            <person name="Mayya V."/>
            <person name="Lundgren D.H."/>
            <person name="Hwang S.-I."/>
            <person name="Rezaul K."/>
            <person name="Wu L."/>
            <person name="Eng J.K."/>
            <person name="Rodionov V."/>
            <person name="Han D.K."/>
        </authorList>
    </citation>
    <scope>PHOSPHORYLATION [LARGE SCALE ANALYSIS] AT SER-909</scope>
    <scope>IDENTIFICATION BY MASS SPECTROMETRY [LARGE SCALE ANALYSIS]</scope>
    <source>
        <tissue>Leukemic T-cell</tissue>
    </source>
</reference>
<reference key="15">
    <citation type="journal article" date="2009" name="Science">
        <title>Lysine acetylation targets protein complexes and co-regulates major cellular functions.</title>
        <authorList>
            <person name="Choudhary C."/>
            <person name="Kumar C."/>
            <person name="Gnad F."/>
            <person name="Nielsen M.L."/>
            <person name="Rehman M."/>
            <person name="Walther T.C."/>
            <person name="Olsen J.V."/>
            <person name="Mann M."/>
        </authorList>
    </citation>
    <scope>ACETYLATION [LARGE SCALE ANALYSIS] AT LYS-193 AND LYS-641</scope>
    <scope>IDENTIFICATION BY MASS SPECTROMETRY [LARGE SCALE ANALYSIS]</scope>
</reference>
<reference key="16">
    <citation type="journal article" date="2010" name="Sci. Signal.">
        <title>Quantitative phosphoproteomics reveals widespread full phosphorylation site occupancy during mitosis.</title>
        <authorList>
            <person name="Olsen J.V."/>
            <person name="Vermeulen M."/>
            <person name="Santamaria A."/>
            <person name="Kumar C."/>
            <person name="Miller M.L."/>
            <person name="Jensen L.J."/>
            <person name="Gnad F."/>
            <person name="Cox J."/>
            <person name="Jensen T.S."/>
            <person name="Nigg E.A."/>
            <person name="Brunak S."/>
            <person name="Mann M."/>
        </authorList>
    </citation>
    <scope>PHOSPHORYLATION [LARGE SCALE ANALYSIS] AT SER-781</scope>
    <scope>IDENTIFICATION BY MASS SPECTROMETRY [LARGE SCALE ANALYSIS]</scope>
    <source>
        <tissue>Cervix carcinoma</tissue>
    </source>
</reference>
<reference key="17">
    <citation type="journal article" date="2011" name="BMC Syst. Biol.">
        <title>Initial characterization of the human central proteome.</title>
        <authorList>
            <person name="Burkard T.R."/>
            <person name="Planyavsky M."/>
            <person name="Kaupe I."/>
            <person name="Breitwieser F.P."/>
            <person name="Buerckstuemmer T."/>
            <person name="Bennett K.L."/>
            <person name="Superti-Furga G."/>
            <person name="Colinge J."/>
        </authorList>
    </citation>
    <scope>IDENTIFICATION BY MASS SPECTROMETRY [LARGE SCALE ANALYSIS]</scope>
</reference>
<reference key="18">
    <citation type="journal article" date="2012" name="Mol. Cell. Proteomics">
        <title>Comparative large-scale characterisation of plant vs. mammal proteins reveals similar and idiosyncratic N-alpha acetylation features.</title>
        <authorList>
            <person name="Bienvenut W.V."/>
            <person name="Sumpton D."/>
            <person name="Martinez A."/>
            <person name="Lilla S."/>
            <person name="Espagne C."/>
            <person name="Meinnel T."/>
            <person name="Giglione C."/>
        </authorList>
    </citation>
    <scope>ACETYLATION [LARGE SCALE ANALYSIS] AT ALA-2</scope>
    <scope>CLEAVAGE OF INITIATOR METHIONINE [LARGE SCALE ANALYSIS]</scope>
    <scope>IDENTIFICATION BY MASS SPECTROMETRY [LARGE SCALE ANALYSIS]</scope>
</reference>
<reference key="19">
    <citation type="journal article" date="2012" name="Proc. Natl. Acad. Sci. U.S.A.">
        <title>N-terminal acetylome analyses and functional insights of the N-terminal acetyltransferase NatB.</title>
        <authorList>
            <person name="Van Damme P."/>
            <person name="Lasa M."/>
            <person name="Polevoda B."/>
            <person name="Gazquez C."/>
            <person name="Elosegui-Artola A."/>
            <person name="Kim D.S."/>
            <person name="De Juan-Pardo E."/>
            <person name="Demeyer K."/>
            <person name="Hole K."/>
            <person name="Larrea E."/>
            <person name="Timmerman E."/>
            <person name="Prieto J."/>
            <person name="Arnesen T."/>
            <person name="Sherman F."/>
            <person name="Gevaert K."/>
            <person name="Aldabe R."/>
        </authorList>
    </citation>
    <scope>ACETYLATION [LARGE SCALE ANALYSIS] AT ALA-2</scope>
    <scope>CLEAVAGE OF INITIATOR METHIONINE [LARGE SCALE ANALYSIS]</scope>
    <scope>IDENTIFICATION BY MASS SPECTROMETRY [LARGE SCALE ANALYSIS]</scope>
</reference>
<reference key="20">
    <citation type="journal article" date="2013" name="J. Proteome Res.">
        <title>Toward a comprehensive characterization of a human cancer cell phosphoproteome.</title>
        <authorList>
            <person name="Zhou H."/>
            <person name="Di Palma S."/>
            <person name="Preisinger C."/>
            <person name="Peng M."/>
            <person name="Polat A.N."/>
            <person name="Heck A.J."/>
            <person name="Mohammed S."/>
        </authorList>
    </citation>
    <scope>PHOSPHORYLATION [LARGE SCALE ANALYSIS] AT THR-103; THR-240; SER-426; SER-645; THR-779; SER-781; SER-785 AND SER-909</scope>
    <scope>IDENTIFICATION BY MASS SPECTROMETRY [LARGE SCALE ANALYSIS]</scope>
    <source>
        <tissue>Cervix carcinoma</tissue>
        <tissue>Erythroleukemia</tissue>
    </source>
</reference>
<reference key="21">
    <citation type="journal article" date="2014" name="J. Proteomics">
        <title>An enzyme assisted RP-RPLC approach for in-depth analysis of human liver phosphoproteome.</title>
        <authorList>
            <person name="Bian Y."/>
            <person name="Song C."/>
            <person name="Cheng K."/>
            <person name="Dong M."/>
            <person name="Wang F."/>
            <person name="Huang J."/>
            <person name="Sun D."/>
            <person name="Wang L."/>
            <person name="Ye M."/>
            <person name="Zou H."/>
        </authorList>
    </citation>
    <scope>PHOSPHORYLATION [LARGE SCALE ANALYSIS] AT SER-426; THR-779; SER-781 AND SER-909</scope>
    <scope>IDENTIFICATION BY MASS SPECTROMETRY [LARGE SCALE ANALYSIS]</scope>
    <source>
        <tissue>Liver</tissue>
    </source>
</reference>
<reference key="22">
    <citation type="journal article" date="2015" name="Proteomics">
        <title>N-terminome analysis of the human mitochondrial proteome.</title>
        <authorList>
            <person name="Vaca Jacome A.S."/>
            <person name="Rabilloud T."/>
            <person name="Schaeffer-Reiss C."/>
            <person name="Rompais M."/>
            <person name="Ayoub D."/>
            <person name="Lane L."/>
            <person name="Bairoch A."/>
            <person name="Van Dorsselaer A."/>
            <person name="Carapito C."/>
        </authorList>
    </citation>
    <scope>ACETYLATION [LARGE SCALE ANALYSIS] AT ALA-2</scope>
    <scope>CLEAVAGE OF INITIATOR METHIONINE [LARGE SCALE ANALYSIS]</scope>
    <scope>IDENTIFICATION BY MASS SPECTROMETRY [LARGE SCALE ANALYSIS]</scope>
</reference>
<reference key="23">
    <citation type="journal article" date="2017" name="Nat. Struct. Mol. Biol.">
        <title>Site-specific mapping of the human SUMO proteome reveals co-modification with phosphorylation.</title>
        <authorList>
            <person name="Hendriks I.A."/>
            <person name="Lyon D."/>
            <person name="Young C."/>
            <person name="Jensen L.J."/>
            <person name="Vertegaal A.C."/>
            <person name="Nielsen M.L."/>
        </authorList>
    </citation>
    <scope>SUMOYLATION [LARGE SCALE ANALYSIS] AT LYS-513</scope>
    <scope>IDENTIFICATION BY MASS SPECTROMETRY [LARGE SCALE ANALYSIS]</scope>
</reference>
<reference key="24">
    <citation type="journal article" date="2017" name="Science">
        <title>Tudor-SN-mediated endonucleolytic decay of human cell microRNAs promotes G1/S phase transition.</title>
        <authorList>
            <person name="Elbarbary R.A."/>
            <person name="Miyoshi K."/>
            <person name="Myers J.R."/>
            <person name="Du P."/>
            <person name="Ashton J.M."/>
            <person name="Tian B."/>
            <person name="Maquat L.E."/>
        </authorList>
    </citation>
    <scope>FUNCTION</scope>
    <scope>CATALYTIC ACTIVITY</scope>
    <scope>ASSOCIATION WITH THE RISC COMPLEX</scope>
    <scope>INTERACTION WITH AGO2 AND TNRC6A</scope>
</reference>
<reference key="25">
    <citation type="journal article" date="2023" name="Cell">
        <title>SND1 binds SARS-CoV-2 negative-sense RNA and promotes viral RNA synthesis through NSP9.</title>
        <authorList>
            <person name="Schmidt N."/>
            <person name="Ganskih S."/>
            <person name="Wei Y."/>
            <person name="Gabel A."/>
            <person name="Zielinski S."/>
            <person name="Keshishian H."/>
            <person name="Lareau C.A."/>
            <person name="Zimmermann L."/>
            <person name="Makroczyova J."/>
            <person name="Pearce C."/>
            <person name="Krey K."/>
            <person name="Hennig T."/>
            <person name="Stegmaier S."/>
            <person name="Moyon L."/>
            <person name="Horlacher M."/>
            <person name="Werner S."/>
            <person name="Aydin J."/>
            <person name="Olguin-Nava M."/>
            <person name="Potabattula R."/>
            <person name="Kibe A."/>
            <person name="Doelken L."/>
            <person name="Smyth R.P."/>
            <person name="Caliskan N."/>
            <person name="Marsico A."/>
            <person name="Krempl C."/>
            <person name="Bodem J."/>
            <person name="Pichlmair A."/>
            <person name="Carr S.A."/>
            <person name="Chlanda P."/>
            <person name="Erhard F."/>
            <person name="Munschauer M."/>
        </authorList>
    </citation>
    <scope>FUNCTION (MICROBIAL INFECTION)</scope>
    <scope>INTERACTION WITH SARS-COV-2 NSP9</scope>
</reference>
<reference key="26">
    <citation type="submission" date="2007-07" db="PDB data bank">
        <title>Solution structure of the Tudor domain of staphylococcal nuclease domain-containing protein 1.</title>
        <authorList>
            <consortium name="RIKEN structural genomics initiative (RSGI)"/>
        </authorList>
    </citation>
    <scope>STRUCTURE BY NMR OF 704-800</scope>
</reference>
<reference evidence="16" key="27">
    <citation type="journal article" date="2008" name="Nucleic Acids Res.">
        <title>Structural and functional insights into human Tudor-SN, a key component linking RNA interference and editing.</title>
        <authorList>
            <person name="Li C.L."/>
            <person name="Yang W.Z."/>
            <person name="Chen Y.P."/>
            <person name="Yuan H.S."/>
        </authorList>
    </citation>
    <scope>X-RAY CRYSTALLOGRAPHY (1.90 ANGSTROMS) OF 340-888</scope>
    <scope>FUNCTION</scope>
    <scope>CATALYTIC ACTIVITY</scope>
</reference>
<proteinExistence type="evidence at protein level"/>
<comment type="function">
    <text evidence="1 5 9 10 13">Endonuclease that mediates miRNA decay of both protein-free and AGO2-loaded miRNAs (PubMed:18453631, PubMed:28546213). As part of its function in miRNA decay, regulates mRNAs involved in G1-to-S phase transition (PubMed:28546213). Functions as a bridging factor between STAT6 and the basal transcription factor (PubMed:12234934). Plays a role in PIM1 regulation of MYB activity (PubMed:9809063). Functions as a transcriptional coactivator for STAT5 (By similarity).</text>
</comment>
<comment type="function">
    <text evidence="12">(Microbial infection) Functions as a transcriptional coactivator for the Epstein-Barr virus nuclear antigen 2 (EBNA2).</text>
</comment>
<comment type="function">
    <text evidence="11">(Microbial infection) Promotes SARS-CoV-2 RNA synthesis by binding to negative-sense RNA and the viral protein nsp9.</text>
</comment>
<comment type="catalytic activity">
    <reaction evidence="9 10">
        <text>Endonucleolytic cleavage to nucleoside 3'-phosphates and 3'-phosphooligonucleotide end-products.</text>
        <dbReference type="EC" id="3.1.31.1"/>
    </reaction>
</comment>
<comment type="subunit">
    <text evidence="1 5 7 10 12 13">Forms a ternary complex with STAT6 and POLR2A (PubMed:12234934). Associates with the RNA-induced silencing complex (RISC) (PubMed:14508492, PubMed:28546213). Interacts with the RISC components AGO2, FMR1 and TNRC6A (PubMed:14508492, PubMed:28546213). Interacts with GTF2E1 and GTF2E2 (PubMed:7651391). Interacts with PIM1 (PubMed:9809063). Interacts with STAT5 (By similarity). Interacts with SYT11 (via C2 2 domain); the interaction with SYT11 is direct (By similarity).</text>
</comment>
<comment type="subunit">
    <text evidence="6 11 12">(Microbial infection) Interacts with EAV NSP1 (PubMed:12917451). Binds to acidic transactivation domain of EBNA2 (PubMed:7651391). Interacts with SARS-CoV-2 NSP9 (PubMed:37794589).</text>
</comment>
<comment type="interaction">
    <interactant intactId="EBI-1044112">
        <id>Q7KZF4</id>
    </interactant>
    <interactant intactId="EBI-1047359">
        <id>Q13283</id>
        <label>G3BP1</label>
    </interactant>
    <organismsDiffer>false</organismsDiffer>
    <experiments>3</experiments>
</comment>
<comment type="interaction">
    <interactant intactId="EBI-1044112">
        <id>Q7KZF4</id>
    </interactant>
    <interactant intactId="EBI-1046588">
        <id>Q86UE4</id>
        <label>MTDH</label>
    </interactant>
    <organismsDiffer>false</organismsDiffer>
    <experiments>9</experiments>
</comment>
<comment type="interaction">
    <interactant intactId="EBI-1044112">
        <id>Q7KZF4</id>
    </interactant>
    <interactant intactId="EBI-527417">
        <id>Q96J94</id>
        <label>PIWIL1</label>
    </interactant>
    <organismsDiffer>false</organismsDiffer>
    <experiments>4</experiments>
</comment>
<comment type="subcellular location">
    <subcellularLocation>
        <location evidence="7 8">Cytoplasm</location>
    </subcellularLocation>
    <subcellularLocation>
        <location evidence="5 7 8 12">Nucleus</location>
    </subcellularLocation>
    <subcellularLocation>
        <location evidence="8">Melanosome</location>
    </subcellularLocation>
    <text evidence="5 8">In IL-4 stimulated cells colocalizes with STAT6 in the nucleus (PubMed:12234934). Identified by mass spectrometry in melanosome fractions from stage I to stage IV (PubMed:17081065).</text>
</comment>
<comment type="tissue specificity">
    <text evidence="12">Ubiquitously expressed.</text>
</comment>
<comment type="PTM">
    <text evidence="13">Phosphorylated by PIM1 in vitro.</text>
</comment>
<comment type="sequence caution" evidence="15">
    <conflict type="frameshift">
        <sequence resource="EMBL-CDS" id="AAA80488"/>
    </conflict>
    <text>The frameshift leads to wrong initiation.</text>
</comment>
<accession>Q7KZF4</accession>
<accession>Q13122</accession>
<accession>Q96AG0</accession>